<evidence type="ECO:0000269" key="1">
    <source>
    </source>
</evidence>
<evidence type="ECO:0000305" key="2"/>
<organism evidence="2">
    <name type="scientific">Macrobrachium rosenbergii</name>
    <name type="common">Giant fresh water prawn</name>
    <dbReference type="NCBI Taxonomy" id="79674"/>
    <lineage>
        <taxon>Eukaryota</taxon>
        <taxon>Metazoa</taxon>
        <taxon>Ecdysozoa</taxon>
        <taxon>Arthropoda</taxon>
        <taxon>Crustacea</taxon>
        <taxon>Multicrustacea</taxon>
        <taxon>Malacostraca</taxon>
        <taxon>Eumalacostraca</taxon>
        <taxon>Eucarida</taxon>
        <taxon>Decapoda</taxon>
        <taxon>Pleocyemata</taxon>
        <taxon>Caridea</taxon>
        <taxon>Palaemonoidea</taxon>
        <taxon>Palaemonidae</taxon>
        <taxon>Macrobrachium</taxon>
    </lineage>
</organism>
<dbReference type="GO" id="GO:0005576">
    <property type="term" value="C:extracellular region"/>
    <property type="evidence" value="ECO:0007669"/>
    <property type="project" value="UniProtKB-SubCell"/>
</dbReference>
<dbReference type="GO" id="GO:0007218">
    <property type="term" value="P:neuropeptide signaling pathway"/>
    <property type="evidence" value="ECO:0000314"/>
    <property type="project" value="UniProtKB"/>
</dbReference>
<accession>P83281</accession>
<feature type="peptide" id="PRO_0000043691" description="FMRFamide-like neuropeptide FLP8">
    <location>
        <begin position="1"/>
        <end position="9"/>
    </location>
</feature>
<feature type="modified residue" description="Phenylalanine amide" evidence="1">
    <location>
        <position position="9"/>
    </location>
</feature>
<proteinExistence type="evidence at protein level"/>
<sequence>VSHNNFLRF</sequence>
<reference evidence="2" key="1">
    <citation type="journal article" date="2001" name="Peptides">
        <title>Three more novel FMRFamide-like neuropeptide sequences from the eyestalk of the giant freshwater prawn Macrobrachium rosenbergii.</title>
        <authorList>
            <person name="Sithigorngul P."/>
            <person name="Saraithongkum W."/>
            <person name="Longyant S."/>
            <person name="Panchan N."/>
            <person name="Sithigorngul W."/>
            <person name="Petsom A."/>
        </authorList>
    </citation>
    <scope>PROTEIN SEQUENCE</scope>
    <scope>AMIDATION AT PHE-9</scope>
    <scope>MASS SPECTROMETRY</scope>
    <source>
        <tissue>Eyestalk</tissue>
    </source>
</reference>
<comment type="subcellular location">
    <subcellularLocation>
        <location>Secreted</location>
    </subcellularLocation>
</comment>
<comment type="mass spectrometry"/>
<comment type="similarity">
    <text evidence="2">Belongs to the FARP (FMRFamide related peptide) family.</text>
</comment>
<protein>
    <recommendedName>
        <fullName>FMRFamide-like neuropeptide FLP8</fullName>
    </recommendedName>
    <alternativeName>
        <fullName>VSHNNFLRF-amide</fullName>
    </alternativeName>
</protein>
<name>FAR8_MACRS</name>
<keyword id="KW-0027">Amidation</keyword>
<keyword id="KW-0903">Direct protein sequencing</keyword>
<keyword id="KW-0527">Neuropeptide</keyword>
<keyword id="KW-0964">Secreted</keyword>